<name>KDSA_RHIME</name>
<keyword id="KW-0963">Cytoplasm</keyword>
<keyword id="KW-0448">Lipopolysaccharide biosynthesis</keyword>
<keyword id="KW-1185">Reference proteome</keyword>
<keyword id="KW-0808">Transferase</keyword>
<comment type="catalytic activity">
    <reaction evidence="1">
        <text>D-arabinose 5-phosphate + phosphoenolpyruvate + H2O = 3-deoxy-alpha-D-manno-2-octulosonate-8-phosphate + phosphate</text>
        <dbReference type="Rhea" id="RHEA:14053"/>
        <dbReference type="ChEBI" id="CHEBI:15377"/>
        <dbReference type="ChEBI" id="CHEBI:43474"/>
        <dbReference type="ChEBI" id="CHEBI:57693"/>
        <dbReference type="ChEBI" id="CHEBI:58702"/>
        <dbReference type="ChEBI" id="CHEBI:85985"/>
        <dbReference type="EC" id="2.5.1.55"/>
    </reaction>
</comment>
<comment type="pathway">
    <text evidence="1">Carbohydrate biosynthesis; 3-deoxy-D-manno-octulosonate biosynthesis; 3-deoxy-D-manno-octulosonate from D-ribulose 5-phosphate: step 2/3.</text>
</comment>
<comment type="pathway">
    <text evidence="1">Bacterial outer membrane biogenesis; lipopolysaccharide biosynthesis.</text>
</comment>
<comment type="subcellular location">
    <subcellularLocation>
        <location evidence="1">Cytoplasm</location>
    </subcellularLocation>
</comment>
<comment type="similarity">
    <text evidence="1">Belongs to the KdsA family.</text>
</comment>
<dbReference type="EC" id="2.5.1.55" evidence="1"/>
<dbReference type="EMBL" id="AL591688">
    <property type="protein sequence ID" value="CAC46021.1"/>
    <property type="molecule type" value="Genomic_DNA"/>
</dbReference>
<dbReference type="RefSeq" id="NP_385548.1">
    <property type="nucleotide sequence ID" value="NC_003047.1"/>
</dbReference>
<dbReference type="RefSeq" id="WP_003534735.1">
    <property type="nucleotide sequence ID" value="NC_003047.1"/>
</dbReference>
<dbReference type="SMR" id="Q92Q99"/>
<dbReference type="EnsemblBacteria" id="CAC46021">
    <property type="protein sequence ID" value="CAC46021"/>
    <property type="gene ID" value="SMc01027"/>
</dbReference>
<dbReference type="GeneID" id="89575767"/>
<dbReference type="KEGG" id="sme:SMc01027"/>
<dbReference type="PATRIC" id="fig|266834.11.peg.2862"/>
<dbReference type="eggNOG" id="COG2877">
    <property type="taxonomic scope" value="Bacteria"/>
</dbReference>
<dbReference type="HOGENOM" id="CLU_036666_0_0_5"/>
<dbReference type="OrthoDB" id="9776934at2"/>
<dbReference type="UniPathway" id="UPA00030"/>
<dbReference type="UniPathway" id="UPA00357">
    <property type="reaction ID" value="UER00474"/>
</dbReference>
<dbReference type="Proteomes" id="UP000001976">
    <property type="component" value="Chromosome"/>
</dbReference>
<dbReference type="GO" id="GO:0005737">
    <property type="term" value="C:cytoplasm"/>
    <property type="evidence" value="ECO:0007669"/>
    <property type="project" value="UniProtKB-SubCell"/>
</dbReference>
<dbReference type="GO" id="GO:0008676">
    <property type="term" value="F:3-deoxy-8-phosphooctulonate synthase activity"/>
    <property type="evidence" value="ECO:0007669"/>
    <property type="project" value="UniProtKB-UniRule"/>
</dbReference>
<dbReference type="GO" id="GO:0019294">
    <property type="term" value="P:keto-3-deoxy-D-manno-octulosonic acid biosynthetic process"/>
    <property type="evidence" value="ECO:0007669"/>
    <property type="project" value="UniProtKB-UniRule"/>
</dbReference>
<dbReference type="Gene3D" id="3.20.20.70">
    <property type="entry name" value="Aldolase class I"/>
    <property type="match status" value="1"/>
</dbReference>
<dbReference type="HAMAP" id="MF_00056">
    <property type="entry name" value="KDO8P_synth"/>
    <property type="match status" value="1"/>
</dbReference>
<dbReference type="InterPro" id="IPR013785">
    <property type="entry name" value="Aldolase_TIM"/>
</dbReference>
<dbReference type="InterPro" id="IPR006218">
    <property type="entry name" value="DAHP1/KDSA"/>
</dbReference>
<dbReference type="InterPro" id="IPR006269">
    <property type="entry name" value="KDO8P_synthase"/>
</dbReference>
<dbReference type="NCBIfam" id="TIGR01362">
    <property type="entry name" value="KDO8P_synth"/>
    <property type="match status" value="1"/>
</dbReference>
<dbReference type="NCBIfam" id="NF003543">
    <property type="entry name" value="PRK05198.1"/>
    <property type="match status" value="1"/>
</dbReference>
<dbReference type="PANTHER" id="PTHR21057">
    <property type="entry name" value="PHOSPHO-2-DEHYDRO-3-DEOXYHEPTONATE ALDOLASE"/>
    <property type="match status" value="1"/>
</dbReference>
<dbReference type="Pfam" id="PF00793">
    <property type="entry name" value="DAHP_synth_1"/>
    <property type="match status" value="1"/>
</dbReference>
<dbReference type="SUPFAM" id="SSF51569">
    <property type="entry name" value="Aldolase"/>
    <property type="match status" value="1"/>
</dbReference>
<proteinExistence type="inferred from homology"/>
<gene>
    <name evidence="1" type="primary">kdsA</name>
    <name type="ordered locus">R01442</name>
    <name type="ORF">SMc01027</name>
</gene>
<feature type="chain" id="PRO_0000187156" description="2-dehydro-3-deoxyphosphooctonate aldolase">
    <location>
        <begin position="1"/>
        <end position="280"/>
    </location>
</feature>
<sequence length="280" mass="29955">MMETNSRVVVGEGAGQVVFSQKERLTLIAGPCQMESREHAFMIAGELVELCRSLGLGLVYKSSFDKANRTSLSGKRGIGLDKAMEVFADLKREFGFPVLTDIHTEEQCAAVAETVDILQIPAFLSRQTDLLVAAAKTGRTINVKKGQFLAPWDMKNVLAKFTESGNPNVLLCERGASFGYNTLVSDMRSLPIMAALGAPVVFDATHSVQQPGGQGGSTGGQREFVETLARAAVAVGVAGVFVETHEDPDNAPSDGPNMVPLKDMPRLLEKLLAFDAVAKA</sequence>
<organism>
    <name type="scientific">Rhizobium meliloti (strain 1021)</name>
    <name type="common">Ensifer meliloti</name>
    <name type="synonym">Sinorhizobium meliloti</name>
    <dbReference type="NCBI Taxonomy" id="266834"/>
    <lineage>
        <taxon>Bacteria</taxon>
        <taxon>Pseudomonadati</taxon>
        <taxon>Pseudomonadota</taxon>
        <taxon>Alphaproteobacteria</taxon>
        <taxon>Hyphomicrobiales</taxon>
        <taxon>Rhizobiaceae</taxon>
        <taxon>Sinorhizobium/Ensifer group</taxon>
        <taxon>Sinorhizobium</taxon>
    </lineage>
</organism>
<reference key="1">
    <citation type="journal article" date="2001" name="Proc. Natl. Acad. Sci. U.S.A.">
        <title>Analysis of the chromosome sequence of the legume symbiont Sinorhizobium meliloti strain 1021.</title>
        <authorList>
            <person name="Capela D."/>
            <person name="Barloy-Hubler F."/>
            <person name="Gouzy J."/>
            <person name="Bothe G."/>
            <person name="Ampe F."/>
            <person name="Batut J."/>
            <person name="Boistard P."/>
            <person name="Becker A."/>
            <person name="Boutry M."/>
            <person name="Cadieu E."/>
            <person name="Dreano S."/>
            <person name="Gloux S."/>
            <person name="Godrie T."/>
            <person name="Goffeau A."/>
            <person name="Kahn D."/>
            <person name="Kiss E."/>
            <person name="Lelaure V."/>
            <person name="Masuy D."/>
            <person name="Pohl T."/>
            <person name="Portetelle D."/>
            <person name="Puehler A."/>
            <person name="Purnelle B."/>
            <person name="Ramsperger U."/>
            <person name="Renard C."/>
            <person name="Thebault P."/>
            <person name="Vandenbol M."/>
            <person name="Weidner S."/>
            <person name="Galibert F."/>
        </authorList>
    </citation>
    <scope>NUCLEOTIDE SEQUENCE [LARGE SCALE GENOMIC DNA]</scope>
    <source>
        <strain>1021</strain>
    </source>
</reference>
<reference key="2">
    <citation type="journal article" date="2001" name="Science">
        <title>The composite genome of the legume symbiont Sinorhizobium meliloti.</title>
        <authorList>
            <person name="Galibert F."/>
            <person name="Finan T.M."/>
            <person name="Long S.R."/>
            <person name="Puehler A."/>
            <person name="Abola P."/>
            <person name="Ampe F."/>
            <person name="Barloy-Hubler F."/>
            <person name="Barnett M.J."/>
            <person name="Becker A."/>
            <person name="Boistard P."/>
            <person name="Bothe G."/>
            <person name="Boutry M."/>
            <person name="Bowser L."/>
            <person name="Buhrmester J."/>
            <person name="Cadieu E."/>
            <person name="Capela D."/>
            <person name="Chain P."/>
            <person name="Cowie A."/>
            <person name="Davis R.W."/>
            <person name="Dreano S."/>
            <person name="Federspiel N.A."/>
            <person name="Fisher R.F."/>
            <person name="Gloux S."/>
            <person name="Godrie T."/>
            <person name="Goffeau A."/>
            <person name="Golding B."/>
            <person name="Gouzy J."/>
            <person name="Gurjal M."/>
            <person name="Hernandez-Lucas I."/>
            <person name="Hong A."/>
            <person name="Huizar L."/>
            <person name="Hyman R.W."/>
            <person name="Jones T."/>
            <person name="Kahn D."/>
            <person name="Kahn M.L."/>
            <person name="Kalman S."/>
            <person name="Keating D.H."/>
            <person name="Kiss E."/>
            <person name="Komp C."/>
            <person name="Lelaure V."/>
            <person name="Masuy D."/>
            <person name="Palm C."/>
            <person name="Peck M.C."/>
            <person name="Pohl T.M."/>
            <person name="Portetelle D."/>
            <person name="Purnelle B."/>
            <person name="Ramsperger U."/>
            <person name="Surzycki R."/>
            <person name="Thebault P."/>
            <person name="Vandenbol M."/>
            <person name="Vorhoelter F.J."/>
            <person name="Weidner S."/>
            <person name="Wells D.H."/>
            <person name="Wong K."/>
            <person name="Yeh K.-C."/>
            <person name="Batut J."/>
        </authorList>
    </citation>
    <scope>NUCLEOTIDE SEQUENCE [LARGE SCALE GENOMIC DNA]</scope>
    <source>
        <strain>1021</strain>
    </source>
</reference>
<accession>Q92Q99</accession>
<evidence type="ECO:0000255" key="1">
    <source>
        <dbReference type="HAMAP-Rule" id="MF_00056"/>
    </source>
</evidence>
<protein>
    <recommendedName>
        <fullName evidence="1">2-dehydro-3-deoxyphosphooctonate aldolase</fullName>
        <ecNumber evidence="1">2.5.1.55</ecNumber>
    </recommendedName>
    <alternativeName>
        <fullName evidence="1">3-deoxy-D-manno-octulosonic acid 8-phosphate synthase</fullName>
    </alternativeName>
    <alternativeName>
        <fullName evidence="1">KDO-8-phosphate synthase</fullName>
        <shortName evidence="1">KDO 8-P synthase</shortName>
        <shortName evidence="1">KDOPS</shortName>
    </alternativeName>
    <alternativeName>
        <fullName evidence="1">Phospho-2-dehydro-3-deoxyoctonate aldolase</fullName>
    </alternativeName>
</protein>